<gene>
    <name type="primary">U79</name>
    <name type="synonym">CB7R</name>
</gene>
<accession>P52530</accession>
<accession>Q9IBR6</accession>
<organism>
    <name type="scientific">Human herpesvirus 6B (strain Z29)</name>
    <name type="common">HHV-6 variant B</name>
    <name type="synonym">Human B lymphotropic virus</name>
    <dbReference type="NCBI Taxonomy" id="36351"/>
    <lineage>
        <taxon>Viruses</taxon>
        <taxon>Duplodnaviria</taxon>
        <taxon>Heunggongvirae</taxon>
        <taxon>Peploviricota</taxon>
        <taxon>Herviviricetes</taxon>
        <taxon>Herpesvirales</taxon>
        <taxon>Orthoherpesviridae</taxon>
        <taxon>Betaherpesvirinae</taxon>
        <taxon>Roseolovirus</taxon>
        <taxon>Roseolovirus humanbeta6b</taxon>
        <taxon>Human herpesvirus 6B</taxon>
    </lineage>
</organism>
<dbReference type="EMBL" id="AF157706">
    <property type="protein sequence ID" value="AAD49671.1"/>
    <property type="molecule type" value="Genomic_DNA"/>
</dbReference>
<dbReference type="RefSeq" id="NP_050259.1">
    <property type="nucleotide sequence ID" value="NC_000898.1"/>
</dbReference>
<dbReference type="SMR" id="P52530"/>
<dbReference type="DNASU" id="1497080"/>
<dbReference type="GeneID" id="1497080"/>
<dbReference type="KEGG" id="vg:1497080"/>
<dbReference type="Proteomes" id="UP000006930">
    <property type="component" value="Segment"/>
</dbReference>
<dbReference type="GO" id="GO:0042025">
    <property type="term" value="C:host cell nucleus"/>
    <property type="evidence" value="ECO:0007669"/>
    <property type="project" value="UniProtKB-SubCell"/>
</dbReference>
<dbReference type="InterPro" id="IPR004138">
    <property type="entry name" value="U79_P34"/>
</dbReference>
<dbReference type="Pfam" id="PF03064">
    <property type="entry name" value="U79_P34"/>
    <property type="match status" value="1"/>
</dbReference>
<keyword id="KW-1048">Host nucleus</keyword>
<keyword id="KW-1185">Reference proteome</keyword>
<evidence type="ECO:0000250" key="1"/>
<evidence type="ECO:0000256" key="2">
    <source>
        <dbReference type="SAM" id="MobiDB-lite"/>
    </source>
</evidence>
<evidence type="ECO:0000305" key="3"/>
<protein>
    <recommendedName>
        <fullName>Protein U79</fullName>
    </recommendedName>
</protein>
<name>U79_HHV6Z</name>
<organismHost>
    <name type="scientific">Homo sapiens</name>
    <name type="common">Human</name>
    <dbReference type="NCBI Taxonomy" id="9606"/>
</organismHost>
<proteinExistence type="inferred from homology"/>
<feature type="chain" id="PRO_0000116326" description="Protein U79">
    <location>
        <begin position="1"/>
        <end position="480"/>
    </location>
</feature>
<feature type="region of interest" description="Disordered" evidence="2">
    <location>
        <begin position="156"/>
        <end position="241"/>
    </location>
</feature>
<feature type="region of interest" description="Disordered" evidence="2">
    <location>
        <begin position="417"/>
        <end position="438"/>
    </location>
</feature>
<feature type="compositionally biased region" description="Basic and acidic residues" evidence="2">
    <location>
        <begin position="156"/>
        <end position="165"/>
    </location>
</feature>
<feature type="compositionally biased region" description="Basic and acidic residues" evidence="2">
    <location>
        <begin position="175"/>
        <end position="215"/>
    </location>
</feature>
<feature type="compositionally biased region" description="Basic and acidic residues" evidence="2">
    <location>
        <begin position="225"/>
        <end position="236"/>
    </location>
</feature>
<feature type="compositionally biased region" description="Basic residues" evidence="2">
    <location>
        <begin position="422"/>
        <end position="437"/>
    </location>
</feature>
<reference key="1">
    <citation type="journal article" date="1996" name="Arch. Virol.">
        <title>Restriction endonuclease mapping and molecular cloning of the human herpesvirus 6 variant B strain Z29 genome.</title>
        <authorList>
            <person name="Lindquester G.J."/>
            <person name="Inoue N."/>
            <person name="Allen R.D."/>
            <person name="Castelli J.W."/>
            <person name="Stamey F.R."/>
            <person name="Dambaugh T.R."/>
            <person name="O'Brian J.J."/>
            <person name="Danovich R.M."/>
            <person name="Frenkel N."/>
            <person name="Pellett P.E."/>
        </authorList>
    </citation>
    <scope>NUCLEOTIDE SEQUENCE [GENOMIC DNA]</scope>
</reference>
<reference key="2">
    <citation type="journal article" date="1999" name="J. Virol.">
        <title>Human herpesvirus 6B genome sequence: coding content and comparison with human herpesvirus 6A.</title>
        <authorList>
            <person name="Dominguez G."/>
            <person name="Dambaugh T.R."/>
            <person name="Stamey F.R."/>
            <person name="Dewhurst S."/>
            <person name="Inoue N."/>
            <person name="Pellett P.E."/>
        </authorList>
    </citation>
    <scope>NUCLEOTIDE SEQUENCE [GENOMIC DNA]</scope>
    <scope>SEQUENCE REVISION</scope>
</reference>
<sequence length="480" mass="55015">MYAEERGYGSFDNVIQAYEQIISQSLHLKRFEFDNGCFIEFLADSGTCETFSKGWISMIYWTSETDSMGSLTVDIGMDEGKCRTYRARGLLLCSKSITSISQNTEGRERILTVSHENGKLQITFVTIAKVSSEPELRNLGDLKFMEKFEKECRALDRKKHDDEHRKRSGKQKEKRKVEDIDKKKEDEKRKQEEKKRNDEDKRPDKKDEFDEPPKEKRQKSHHETKRNLEEQSHEDGIAPTSTTFVNGAVEGALSPCVSIDNHEDQQHDELDKRVYAQGTNREGLSNEDNYGNFQLNKSLEQLRARLVASSGEVVERSLSKLKERLDYVKDNLIKNVLECADVTVPSKCLSKTKHIEQKKQIVFSDCVRSVPVCEIKPFIDMRVFETETTQNARRVRQRTRTTVGSTDGAIGQQRVISGQNRGRARGRGRGRVPRRRNSNLNNLRTQNSAIVIDDSSETENFENAGSFNEDLLATTILETL</sequence>
<comment type="function">
    <text evidence="3">May be involved in DNA replication.</text>
</comment>
<comment type="subcellular location">
    <subcellularLocation>
        <location evidence="1">Host nucleus</location>
    </subcellularLocation>
</comment>
<comment type="similarity">
    <text evidence="3">Belongs to the herpesviridae U79/UL112 family.</text>
</comment>